<evidence type="ECO:0000255" key="1">
    <source>
        <dbReference type="HAMAP-Rule" id="MF_00456"/>
    </source>
</evidence>
<accession>A9VK32</accession>
<dbReference type="EC" id="2.7.2.11" evidence="1"/>
<dbReference type="EMBL" id="CP000903">
    <property type="protein sequence ID" value="ABY43987.1"/>
    <property type="molecule type" value="Genomic_DNA"/>
</dbReference>
<dbReference type="RefSeq" id="WP_002142284.1">
    <property type="nucleotide sequence ID" value="NC_010184.1"/>
</dbReference>
<dbReference type="SMR" id="A9VK32"/>
<dbReference type="KEGG" id="bwe:BcerKBAB4_2790"/>
<dbReference type="eggNOG" id="COG0263">
    <property type="taxonomic scope" value="Bacteria"/>
</dbReference>
<dbReference type="HOGENOM" id="CLU_025400_2_0_9"/>
<dbReference type="UniPathway" id="UPA00098">
    <property type="reaction ID" value="UER00359"/>
</dbReference>
<dbReference type="Proteomes" id="UP000002154">
    <property type="component" value="Chromosome"/>
</dbReference>
<dbReference type="GO" id="GO:0005829">
    <property type="term" value="C:cytosol"/>
    <property type="evidence" value="ECO:0007669"/>
    <property type="project" value="TreeGrafter"/>
</dbReference>
<dbReference type="GO" id="GO:0005524">
    <property type="term" value="F:ATP binding"/>
    <property type="evidence" value="ECO:0007669"/>
    <property type="project" value="UniProtKB-KW"/>
</dbReference>
<dbReference type="GO" id="GO:0004349">
    <property type="term" value="F:glutamate 5-kinase activity"/>
    <property type="evidence" value="ECO:0007669"/>
    <property type="project" value="UniProtKB-UniRule"/>
</dbReference>
<dbReference type="GO" id="GO:0003723">
    <property type="term" value="F:RNA binding"/>
    <property type="evidence" value="ECO:0007669"/>
    <property type="project" value="InterPro"/>
</dbReference>
<dbReference type="GO" id="GO:0055129">
    <property type="term" value="P:L-proline biosynthetic process"/>
    <property type="evidence" value="ECO:0007669"/>
    <property type="project" value="UniProtKB-UniRule"/>
</dbReference>
<dbReference type="CDD" id="cd04242">
    <property type="entry name" value="AAK_G5K_ProB"/>
    <property type="match status" value="1"/>
</dbReference>
<dbReference type="CDD" id="cd21157">
    <property type="entry name" value="PUA_G5K"/>
    <property type="match status" value="1"/>
</dbReference>
<dbReference type="FunFam" id="2.30.130.10:FF:000007">
    <property type="entry name" value="Glutamate 5-kinase"/>
    <property type="match status" value="1"/>
</dbReference>
<dbReference type="FunFam" id="3.40.1160.10:FF:000018">
    <property type="entry name" value="Glutamate 5-kinase"/>
    <property type="match status" value="1"/>
</dbReference>
<dbReference type="Gene3D" id="3.40.1160.10">
    <property type="entry name" value="Acetylglutamate kinase-like"/>
    <property type="match status" value="1"/>
</dbReference>
<dbReference type="Gene3D" id="2.30.130.10">
    <property type="entry name" value="PUA domain"/>
    <property type="match status" value="1"/>
</dbReference>
<dbReference type="HAMAP" id="MF_00456">
    <property type="entry name" value="ProB"/>
    <property type="match status" value="1"/>
</dbReference>
<dbReference type="InterPro" id="IPR036393">
    <property type="entry name" value="AceGlu_kinase-like_sf"/>
</dbReference>
<dbReference type="InterPro" id="IPR001048">
    <property type="entry name" value="Asp/Glu/Uridylate_kinase"/>
</dbReference>
<dbReference type="InterPro" id="IPR041739">
    <property type="entry name" value="G5K_ProB"/>
</dbReference>
<dbReference type="InterPro" id="IPR001057">
    <property type="entry name" value="Glu/AcGlu_kinase"/>
</dbReference>
<dbReference type="InterPro" id="IPR011529">
    <property type="entry name" value="Glu_5kinase"/>
</dbReference>
<dbReference type="InterPro" id="IPR005715">
    <property type="entry name" value="Glu_5kinase/COase_Synthase"/>
</dbReference>
<dbReference type="InterPro" id="IPR019797">
    <property type="entry name" value="Glutamate_5-kinase_CS"/>
</dbReference>
<dbReference type="InterPro" id="IPR002478">
    <property type="entry name" value="PUA"/>
</dbReference>
<dbReference type="InterPro" id="IPR015947">
    <property type="entry name" value="PUA-like_sf"/>
</dbReference>
<dbReference type="InterPro" id="IPR036974">
    <property type="entry name" value="PUA_sf"/>
</dbReference>
<dbReference type="NCBIfam" id="TIGR01027">
    <property type="entry name" value="proB"/>
    <property type="match status" value="1"/>
</dbReference>
<dbReference type="PANTHER" id="PTHR43654">
    <property type="entry name" value="GLUTAMATE 5-KINASE"/>
    <property type="match status" value="1"/>
</dbReference>
<dbReference type="PANTHER" id="PTHR43654:SF1">
    <property type="entry name" value="ISOPENTENYL PHOSPHATE KINASE"/>
    <property type="match status" value="1"/>
</dbReference>
<dbReference type="Pfam" id="PF00696">
    <property type="entry name" value="AA_kinase"/>
    <property type="match status" value="1"/>
</dbReference>
<dbReference type="Pfam" id="PF01472">
    <property type="entry name" value="PUA"/>
    <property type="match status" value="1"/>
</dbReference>
<dbReference type="PIRSF" id="PIRSF000729">
    <property type="entry name" value="GK"/>
    <property type="match status" value="1"/>
</dbReference>
<dbReference type="PRINTS" id="PR00474">
    <property type="entry name" value="GLU5KINASE"/>
</dbReference>
<dbReference type="SMART" id="SM00359">
    <property type="entry name" value="PUA"/>
    <property type="match status" value="1"/>
</dbReference>
<dbReference type="SUPFAM" id="SSF53633">
    <property type="entry name" value="Carbamate kinase-like"/>
    <property type="match status" value="1"/>
</dbReference>
<dbReference type="SUPFAM" id="SSF88697">
    <property type="entry name" value="PUA domain-like"/>
    <property type="match status" value="1"/>
</dbReference>
<dbReference type="PROSITE" id="PS00902">
    <property type="entry name" value="GLUTAMATE_5_KINASE"/>
    <property type="match status" value="1"/>
</dbReference>
<dbReference type="PROSITE" id="PS50890">
    <property type="entry name" value="PUA"/>
    <property type="match status" value="1"/>
</dbReference>
<reference key="1">
    <citation type="journal article" date="2008" name="Chem. Biol. Interact.">
        <title>Extending the Bacillus cereus group genomics to putative food-borne pathogens of different toxicity.</title>
        <authorList>
            <person name="Lapidus A."/>
            <person name="Goltsman E."/>
            <person name="Auger S."/>
            <person name="Galleron N."/>
            <person name="Segurens B."/>
            <person name="Dossat C."/>
            <person name="Land M.L."/>
            <person name="Broussolle V."/>
            <person name="Brillard J."/>
            <person name="Guinebretiere M.-H."/>
            <person name="Sanchis V."/>
            <person name="Nguen-the C."/>
            <person name="Lereclus D."/>
            <person name="Richardson P."/>
            <person name="Wincker P."/>
            <person name="Weissenbach J."/>
            <person name="Ehrlich S.D."/>
            <person name="Sorokin A."/>
        </authorList>
    </citation>
    <scope>NUCLEOTIDE SEQUENCE [LARGE SCALE GENOMIC DNA]</scope>
    <source>
        <strain>KBAB4</strain>
    </source>
</reference>
<gene>
    <name evidence="1" type="primary">proB</name>
    <name type="ordered locus">BcerKBAB4_2790</name>
</gene>
<protein>
    <recommendedName>
        <fullName evidence="1">Glutamate 5-kinase</fullName>
        <ecNumber evidence="1">2.7.2.11</ecNumber>
    </recommendedName>
    <alternativeName>
        <fullName evidence="1">Gamma-glutamyl kinase</fullName>
        <shortName evidence="1">GK</shortName>
    </alternativeName>
</protein>
<organism>
    <name type="scientific">Bacillus mycoides (strain KBAB4)</name>
    <name type="common">Bacillus weihenstephanensis</name>
    <dbReference type="NCBI Taxonomy" id="315730"/>
    <lineage>
        <taxon>Bacteria</taxon>
        <taxon>Bacillati</taxon>
        <taxon>Bacillota</taxon>
        <taxon>Bacilli</taxon>
        <taxon>Bacillales</taxon>
        <taxon>Bacillaceae</taxon>
        <taxon>Bacillus</taxon>
        <taxon>Bacillus cereus group</taxon>
    </lineage>
</organism>
<name>PROB_BACMK</name>
<sequence length="367" mass="39380">MKKQRIAVKIGSSSLADSHGGISKEQLSDHVAALARLKEEGHEVLLITSGAVAAGFSALGYPSRPVTIKGKQAAAAVGQSLLMQAYTEEFRKYGIVTAQLLLTRSDFSRKEQYSNAYATLGELLNRSALPIINENDSISLEELTFGDNDMLSALVSGLVSADMLMIFTDVNGLYDQNPQKNADAKKYHFLPEVTEEIASLAGDAGSKLGTGGMKSKIDAAKTALSLGVSVFIGTGCGQEKFLDVMKGKGDGTYIGNAPQKVIKMNKQWIALHSLVSGQIEVDAGAATAIIQHGKSLLPAGVTSVSGFFQVDEVVEVITQQGRVIGKGQCTYSAEELRNLKGMQSQDIQARGERHNYEVIHRDHWVSF</sequence>
<comment type="function">
    <text evidence="1">Catalyzes the transfer of a phosphate group to glutamate to form L-glutamate 5-phosphate.</text>
</comment>
<comment type="catalytic activity">
    <reaction evidence="1">
        <text>L-glutamate + ATP = L-glutamyl 5-phosphate + ADP</text>
        <dbReference type="Rhea" id="RHEA:14877"/>
        <dbReference type="ChEBI" id="CHEBI:29985"/>
        <dbReference type="ChEBI" id="CHEBI:30616"/>
        <dbReference type="ChEBI" id="CHEBI:58274"/>
        <dbReference type="ChEBI" id="CHEBI:456216"/>
        <dbReference type="EC" id="2.7.2.11"/>
    </reaction>
</comment>
<comment type="pathway">
    <text evidence="1">Amino-acid biosynthesis; L-proline biosynthesis; L-glutamate 5-semialdehyde from L-glutamate: step 1/2.</text>
</comment>
<comment type="subcellular location">
    <subcellularLocation>
        <location evidence="1">Cytoplasm</location>
    </subcellularLocation>
</comment>
<comment type="similarity">
    <text evidence="1">Belongs to the glutamate 5-kinase family.</text>
</comment>
<feature type="chain" id="PRO_1000125212" description="Glutamate 5-kinase">
    <location>
        <begin position="1"/>
        <end position="367"/>
    </location>
</feature>
<feature type="domain" description="PUA" evidence="1">
    <location>
        <begin position="276"/>
        <end position="350"/>
    </location>
</feature>
<feature type="binding site" evidence="1">
    <location>
        <position position="9"/>
    </location>
    <ligand>
        <name>ATP</name>
        <dbReference type="ChEBI" id="CHEBI:30616"/>
    </ligand>
</feature>
<feature type="binding site" evidence="1">
    <location>
        <position position="49"/>
    </location>
    <ligand>
        <name>substrate</name>
    </ligand>
</feature>
<feature type="binding site" evidence="1">
    <location>
        <position position="136"/>
    </location>
    <ligand>
        <name>substrate</name>
    </ligand>
</feature>
<feature type="binding site" evidence="1">
    <location>
        <position position="148"/>
    </location>
    <ligand>
        <name>substrate</name>
    </ligand>
</feature>
<feature type="binding site" evidence="1">
    <location>
        <begin position="168"/>
        <end position="169"/>
    </location>
    <ligand>
        <name>ATP</name>
        <dbReference type="ChEBI" id="CHEBI:30616"/>
    </ligand>
</feature>
<feature type="binding site" evidence="1">
    <location>
        <begin position="210"/>
        <end position="216"/>
    </location>
    <ligand>
        <name>ATP</name>
        <dbReference type="ChEBI" id="CHEBI:30616"/>
    </ligand>
</feature>
<proteinExistence type="inferred from homology"/>
<keyword id="KW-0028">Amino-acid biosynthesis</keyword>
<keyword id="KW-0067">ATP-binding</keyword>
<keyword id="KW-0963">Cytoplasm</keyword>
<keyword id="KW-0418">Kinase</keyword>
<keyword id="KW-0547">Nucleotide-binding</keyword>
<keyword id="KW-0641">Proline biosynthesis</keyword>
<keyword id="KW-0808">Transferase</keyword>